<proteinExistence type="evidence at protein level"/>
<evidence type="ECO:0000250" key="1"/>
<evidence type="ECO:0000255" key="2"/>
<evidence type="ECO:0000255" key="3">
    <source>
        <dbReference type="PROSITE-ProRule" id="PRU10095"/>
    </source>
</evidence>
<evidence type="ECO:0000256" key="4">
    <source>
        <dbReference type="SAM" id="MobiDB-lite"/>
    </source>
</evidence>
<evidence type="ECO:0000305" key="5"/>
<keyword id="KW-0031">Aminopeptidase</keyword>
<keyword id="KW-0903">Direct protein sequencing</keyword>
<keyword id="KW-1015">Disulfide bond</keyword>
<keyword id="KW-0325">Glycoprotein</keyword>
<keyword id="KW-0378">Hydrolase</keyword>
<keyword id="KW-0472">Membrane</keyword>
<keyword id="KW-0479">Metal-binding</keyword>
<keyword id="KW-0482">Metalloprotease</keyword>
<keyword id="KW-0597">Phosphoprotein</keyword>
<keyword id="KW-0645">Protease</keyword>
<keyword id="KW-1185">Reference proteome</keyword>
<keyword id="KW-0735">Signal-anchor</keyword>
<keyword id="KW-0812">Transmembrane</keyword>
<keyword id="KW-1133">Transmembrane helix</keyword>
<keyword id="KW-0862">Zinc</keyword>
<protein>
    <recommendedName>
        <fullName>Thyrotropin-releasing hormone-degrading ectoenzyme</fullName>
        <shortName>TRH-DE</shortName>
        <shortName>TRH-degrading ectoenzyme</shortName>
        <ecNumber>3.4.19.6</ecNumber>
    </recommendedName>
    <alternativeName>
        <fullName>Pyroglutamyl-peptidase II</fullName>
        <shortName>PAP-II</shortName>
    </alternativeName>
    <alternativeName>
        <fullName>TRH-specific aminopeptidase</fullName>
    </alternativeName>
    <alternativeName>
        <fullName>Thyroliberinase</fullName>
    </alternativeName>
</protein>
<accession>Q10836</accession>
<accession>G3V6Q2</accession>
<comment type="function">
    <text>Specific inactivation of TRH after its release.</text>
</comment>
<comment type="catalytic activity">
    <reaction>
        <text>Release of the N-terminal pyroglutamyl group from pGlu-|-His-Xaa tripeptides and pGlu-|-His-Xaa-Gly tetrapeptides.</text>
        <dbReference type="EC" id="3.4.19.6"/>
    </reaction>
</comment>
<comment type="cofactor">
    <cofactor evidence="1">
        <name>Zn(2+)</name>
        <dbReference type="ChEBI" id="CHEBI:29105"/>
    </cofactor>
    <text evidence="1">Binds 1 zinc ion per subunit.</text>
</comment>
<comment type="subunit">
    <text>Homodimer; disulfide-linked.</text>
</comment>
<comment type="subcellular location">
    <subcellularLocation>
        <location>Membrane</location>
        <topology>Single-pass type II membrane protein</topology>
    </subcellularLocation>
</comment>
<comment type="tissue specificity">
    <text>Predominantly expressed in brain and pituitary. Lower levels in lung and liver.</text>
</comment>
<comment type="similarity">
    <text evidence="5">Belongs to the peptidase M1 family.</text>
</comment>
<comment type="sequence caution" evidence="5">
    <conflict type="erroneous initiation">
        <sequence resource="EMBL-CDS" id="CAA56675"/>
    </conflict>
    <text>Truncated N-terminus.</text>
</comment>
<dbReference type="EC" id="3.4.19.6"/>
<dbReference type="EMBL" id="AABR07057140">
    <property type="status" value="NOT_ANNOTATED_CDS"/>
    <property type="molecule type" value="Genomic_DNA"/>
</dbReference>
<dbReference type="EMBL" id="AABR07057141">
    <property type="status" value="NOT_ANNOTATED_CDS"/>
    <property type="molecule type" value="Genomic_DNA"/>
</dbReference>
<dbReference type="EMBL" id="AABR07057142">
    <property type="status" value="NOT_ANNOTATED_CDS"/>
    <property type="molecule type" value="Genomic_DNA"/>
</dbReference>
<dbReference type="EMBL" id="AABR07057143">
    <property type="status" value="NOT_ANNOTATED_CDS"/>
    <property type="molecule type" value="Genomic_DNA"/>
</dbReference>
<dbReference type="EMBL" id="X80535">
    <property type="protein sequence ID" value="CAA56675.1"/>
    <property type="status" value="ALT_INIT"/>
    <property type="molecule type" value="mRNA"/>
</dbReference>
<dbReference type="PIR" id="I59331">
    <property type="entry name" value="I59331"/>
</dbReference>
<dbReference type="RefSeq" id="NP_001102461.1">
    <property type="nucleotide sequence ID" value="NM_001108991.2"/>
</dbReference>
<dbReference type="SMR" id="Q10836"/>
<dbReference type="FunCoup" id="Q10836">
    <property type="interactions" value="337"/>
</dbReference>
<dbReference type="IntAct" id="Q10836">
    <property type="interactions" value="1"/>
</dbReference>
<dbReference type="STRING" id="10116.ENSRNOP00000007461"/>
<dbReference type="MEROPS" id="M01.008"/>
<dbReference type="GlyCosmos" id="Q10836">
    <property type="glycosylation" value="12 sites, No reported glycans"/>
</dbReference>
<dbReference type="GlyGen" id="Q10836">
    <property type="glycosylation" value="13 sites"/>
</dbReference>
<dbReference type="iPTMnet" id="Q10836"/>
<dbReference type="PhosphoSitePlus" id="Q10836"/>
<dbReference type="PaxDb" id="10116-ENSRNOP00000007461"/>
<dbReference type="Ensembl" id="ENSRNOT00000007461.6">
    <property type="protein sequence ID" value="ENSRNOP00000007461.4"/>
    <property type="gene ID" value="ENSRNOG00000005278.6"/>
</dbReference>
<dbReference type="GeneID" id="366894"/>
<dbReference type="KEGG" id="rno:366894"/>
<dbReference type="AGR" id="RGD:728895"/>
<dbReference type="CTD" id="29953"/>
<dbReference type="RGD" id="728895">
    <property type="gene designation" value="Trhde"/>
</dbReference>
<dbReference type="eggNOG" id="KOG1046">
    <property type="taxonomic scope" value="Eukaryota"/>
</dbReference>
<dbReference type="GeneTree" id="ENSGT00940000155878"/>
<dbReference type="HOGENOM" id="CLU_003705_2_2_1"/>
<dbReference type="InParanoid" id="Q10836"/>
<dbReference type="OMA" id="HKRLVMG"/>
<dbReference type="OrthoDB" id="6750768at2759"/>
<dbReference type="PhylomeDB" id="Q10836"/>
<dbReference type="TreeFam" id="TF300395"/>
<dbReference type="BRENDA" id="3.4.19.6">
    <property type="organism ID" value="5301"/>
</dbReference>
<dbReference type="PRO" id="PR:Q10836"/>
<dbReference type="Proteomes" id="UP000002494">
    <property type="component" value="Chromosome 7"/>
</dbReference>
<dbReference type="Bgee" id="ENSRNOG00000005278">
    <property type="expression patterns" value="Expressed in liver and 9 other cell types or tissues"/>
</dbReference>
<dbReference type="GO" id="GO:0005737">
    <property type="term" value="C:cytoplasm"/>
    <property type="evidence" value="ECO:0000318"/>
    <property type="project" value="GO_Central"/>
</dbReference>
<dbReference type="GO" id="GO:0005615">
    <property type="term" value="C:extracellular space"/>
    <property type="evidence" value="ECO:0000318"/>
    <property type="project" value="GO_Central"/>
</dbReference>
<dbReference type="GO" id="GO:0016020">
    <property type="term" value="C:membrane"/>
    <property type="evidence" value="ECO:0000318"/>
    <property type="project" value="GO_Central"/>
</dbReference>
<dbReference type="GO" id="GO:0004177">
    <property type="term" value="F:aminopeptidase activity"/>
    <property type="evidence" value="ECO:0000304"/>
    <property type="project" value="RGD"/>
</dbReference>
<dbReference type="GO" id="GO:0070006">
    <property type="term" value="F:metalloaminopeptidase activity"/>
    <property type="evidence" value="ECO:0000318"/>
    <property type="project" value="GO_Central"/>
</dbReference>
<dbReference type="GO" id="GO:0042277">
    <property type="term" value="F:peptide binding"/>
    <property type="evidence" value="ECO:0000318"/>
    <property type="project" value="GO_Central"/>
</dbReference>
<dbReference type="GO" id="GO:0016920">
    <property type="term" value="F:pyroglutamyl-peptidase activity"/>
    <property type="evidence" value="ECO:0007669"/>
    <property type="project" value="UniProtKB-EC"/>
</dbReference>
<dbReference type="GO" id="GO:0008270">
    <property type="term" value="F:zinc ion binding"/>
    <property type="evidence" value="ECO:0000318"/>
    <property type="project" value="GO_Central"/>
</dbReference>
<dbReference type="GO" id="GO:0043171">
    <property type="term" value="P:peptide catabolic process"/>
    <property type="evidence" value="ECO:0000318"/>
    <property type="project" value="GO_Central"/>
</dbReference>
<dbReference type="GO" id="GO:0006508">
    <property type="term" value="P:proteolysis"/>
    <property type="evidence" value="ECO:0000318"/>
    <property type="project" value="GO_Central"/>
</dbReference>
<dbReference type="CDD" id="cd09601">
    <property type="entry name" value="M1_APN-Q_like"/>
    <property type="match status" value="1"/>
</dbReference>
<dbReference type="FunFam" id="2.60.40.1910:FF:000006">
    <property type="entry name" value="Aminopeptidase"/>
    <property type="match status" value="1"/>
</dbReference>
<dbReference type="FunFam" id="1.25.50.20:FF:000005">
    <property type="entry name" value="Aminopeptidase N-like protein"/>
    <property type="match status" value="1"/>
</dbReference>
<dbReference type="FunFam" id="1.10.390.10:FF:000008">
    <property type="entry name" value="Thyrotropin-releasing hormone-degrading ectoenzyme"/>
    <property type="match status" value="1"/>
</dbReference>
<dbReference type="FunFam" id="2.60.40.1730:FF:000007">
    <property type="entry name" value="thyrotropin-releasing hormone-degrading ectoenzyme"/>
    <property type="match status" value="1"/>
</dbReference>
<dbReference type="Gene3D" id="1.25.50.20">
    <property type="match status" value="1"/>
</dbReference>
<dbReference type="Gene3D" id="2.60.40.1910">
    <property type="match status" value="1"/>
</dbReference>
<dbReference type="Gene3D" id="1.10.390.10">
    <property type="entry name" value="Neutral Protease Domain 2"/>
    <property type="match status" value="1"/>
</dbReference>
<dbReference type="Gene3D" id="2.60.40.1730">
    <property type="entry name" value="tricorn interacting facor f3 domain"/>
    <property type="match status" value="1"/>
</dbReference>
<dbReference type="InterPro" id="IPR045357">
    <property type="entry name" value="Aminopeptidase_N-like_N"/>
</dbReference>
<dbReference type="InterPro" id="IPR042097">
    <property type="entry name" value="Aminopeptidase_N-like_N_sf"/>
</dbReference>
<dbReference type="InterPro" id="IPR024571">
    <property type="entry name" value="ERAP1-like_C_dom"/>
</dbReference>
<dbReference type="InterPro" id="IPR034016">
    <property type="entry name" value="M1_APN-typ"/>
</dbReference>
<dbReference type="InterPro" id="IPR001930">
    <property type="entry name" value="Peptidase_M1"/>
</dbReference>
<dbReference type="InterPro" id="IPR050344">
    <property type="entry name" value="Peptidase_M1_aminopeptidases"/>
</dbReference>
<dbReference type="InterPro" id="IPR014782">
    <property type="entry name" value="Peptidase_M1_dom"/>
</dbReference>
<dbReference type="InterPro" id="IPR027268">
    <property type="entry name" value="Peptidase_M4/M1_CTD_sf"/>
</dbReference>
<dbReference type="PANTHER" id="PTHR11533">
    <property type="entry name" value="PROTEASE M1 ZINC METALLOPROTEASE"/>
    <property type="match status" value="1"/>
</dbReference>
<dbReference type="PANTHER" id="PTHR11533:SF294">
    <property type="entry name" value="THYROTROPIN-RELEASING HORMONE-DEGRADING ECTOENZYME"/>
    <property type="match status" value="1"/>
</dbReference>
<dbReference type="Pfam" id="PF11838">
    <property type="entry name" value="ERAP1_C"/>
    <property type="match status" value="1"/>
</dbReference>
<dbReference type="Pfam" id="PF01433">
    <property type="entry name" value="Peptidase_M1"/>
    <property type="match status" value="1"/>
</dbReference>
<dbReference type="Pfam" id="PF17900">
    <property type="entry name" value="Peptidase_M1_N"/>
    <property type="match status" value="1"/>
</dbReference>
<dbReference type="PRINTS" id="PR00756">
    <property type="entry name" value="ALADIPTASE"/>
</dbReference>
<dbReference type="SUPFAM" id="SSF63737">
    <property type="entry name" value="Leukotriene A4 hydrolase N-terminal domain"/>
    <property type="match status" value="1"/>
</dbReference>
<dbReference type="SUPFAM" id="SSF55486">
    <property type="entry name" value="Metalloproteases ('zincins'), catalytic domain"/>
    <property type="match status" value="1"/>
</dbReference>
<dbReference type="PROSITE" id="PS00142">
    <property type="entry name" value="ZINC_PROTEASE"/>
    <property type="match status" value="1"/>
</dbReference>
<gene>
    <name type="primary">Trhde</name>
</gene>
<feature type="chain" id="PRO_0000095120" description="Thyrotropin-releasing hormone-degrading ectoenzyme">
    <location>
        <begin position="1"/>
        <end position="1066"/>
    </location>
</feature>
<feature type="topological domain" description="Cytoplasmic" evidence="2">
    <location>
        <begin position="1"/>
        <end position="81"/>
    </location>
</feature>
<feature type="transmembrane region" description="Helical; Signal-anchor for type II membrane protein" evidence="2">
    <location>
        <begin position="82"/>
        <end position="102"/>
    </location>
</feature>
<feature type="topological domain" description="Extracellular" evidence="2">
    <location>
        <begin position="103"/>
        <end position="1066"/>
    </location>
</feature>
<feature type="region of interest" description="Disordered" evidence="4">
    <location>
        <begin position="1"/>
        <end position="43"/>
    </location>
</feature>
<feature type="region of interest" description="Disordered" evidence="4">
    <location>
        <begin position="117"/>
        <end position="177"/>
    </location>
</feature>
<feature type="compositionally biased region" description="Basic and acidic residues" evidence="4">
    <location>
        <begin position="1"/>
        <end position="14"/>
    </location>
</feature>
<feature type="compositionally biased region" description="Basic residues" evidence="4">
    <location>
        <begin position="15"/>
        <end position="25"/>
    </location>
</feature>
<feature type="compositionally biased region" description="Gly residues" evidence="4">
    <location>
        <begin position="118"/>
        <end position="127"/>
    </location>
</feature>
<feature type="compositionally biased region" description="Basic and acidic residues" evidence="4">
    <location>
        <begin position="143"/>
        <end position="154"/>
    </location>
</feature>
<feature type="active site" description="Proton acceptor" evidence="3">
    <location>
        <position position="483"/>
    </location>
</feature>
<feature type="binding site" evidence="1">
    <location>
        <begin position="446"/>
        <end position="450"/>
    </location>
    <ligand>
        <name>substrate</name>
    </ligand>
</feature>
<feature type="binding site" evidence="3">
    <location>
        <position position="482"/>
    </location>
    <ligand>
        <name>Zn(2+)</name>
        <dbReference type="ChEBI" id="CHEBI:29105"/>
        <note>catalytic</note>
    </ligand>
</feature>
<feature type="binding site" evidence="3">
    <location>
        <position position="486"/>
    </location>
    <ligand>
        <name>Zn(2+)</name>
        <dbReference type="ChEBI" id="CHEBI:29105"/>
        <note>catalytic</note>
    </ligand>
</feature>
<feature type="binding site" evidence="3">
    <location>
        <position position="505"/>
    </location>
    <ligand>
        <name>Zn(2+)</name>
        <dbReference type="ChEBI" id="CHEBI:29105"/>
        <note>catalytic</note>
    </ligand>
</feature>
<feature type="site" description="Transition state stabilizer" evidence="1">
    <location>
        <position position="569"/>
    </location>
</feature>
<feature type="modified residue" description="Phosphothreonine; by PKC" evidence="2">
    <location>
        <position position="71"/>
    </location>
</feature>
<feature type="glycosylation site" description="N-linked (GlcNAc...) asparagine" evidence="2">
    <location>
        <position position="131"/>
    </location>
</feature>
<feature type="glycosylation site" description="N-linked (GlcNAc...) asparagine" evidence="2">
    <location>
        <position position="202"/>
    </location>
</feature>
<feature type="glycosylation site" description="N-linked (GlcNAc...) asparagine" evidence="2">
    <location>
        <position position="217"/>
    </location>
</feature>
<feature type="glycosylation site" description="N-linked (GlcNAc...) asparagine" evidence="2">
    <location>
        <position position="264"/>
    </location>
</feature>
<feature type="glycosylation site" description="N-linked (GlcNAc...) asparagine" evidence="2">
    <location>
        <position position="380"/>
    </location>
</feature>
<feature type="glycosylation site" description="N-linked (GlcNAc...) asparagine" evidence="2">
    <location>
        <position position="647"/>
    </location>
</feature>
<feature type="glycosylation site" description="N-linked (GlcNAc...) asparagine" evidence="2">
    <location>
        <position position="676"/>
    </location>
</feature>
<feature type="glycosylation site" description="N-linked (GlcNAc...) asparagine" evidence="2">
    <location>
        <position position="691"/>
    </location>
</feature>
<feature type="glycosylation site" description="N-linked (GlcNAc...) asparagine" evidence="2">
    <location>
        <position position="705"/>
    </location>
</feature>
<feature type="glycosylation site" description="N-linked (GlcNAc...) asparagine" evidence="2">
    <location>
        <position position="726"/>
    </location>
</feature>
<feature type="glycosylation site" description="N-linked (GlcNAc...) asparagine" evidence="2">
    <location>
        <position position="842"/>
    </location>
</feature>
<feature type="glycosylation site" description="N-linked (GlcNAc...) asparagine" evidence="2">
    <location>
        <position position="948"/>
    </location>
</feature>
<feature type="disulfide bond" description="Interchain">
    <location>
        <position position="109"/>
    </location>
</feature>
<organism>
    <name type="scientific">Rattus norvegicus</name>
    <name type="common">Rat</name>
    <dbReference type="NCBI Taxonomy" id="10116"/>
    <lineage>
        <taxon>Eukaryota</taxon>
        <taxon>Metazoa</taxon>
        <taxon>Chordata</taxon>
        <taxon>Craniata</taxon>
        <taxon>Vertebrata</taxon>
        <taxon>Euteleostomi</taxon>
        <taxon>Mammalia</taxon>
        <taxon>Eutheria</taxon>
        <taxon>Euarchontoglires</taxon>
        <taxon>Glires</taxon>
        <taxon>Rodentia</taxon>
        <taxon>Myomorpha</taxon>
        <taxon>Muroidea</taxon>
        <taxon>Muridae</taxon>
        <taxon>Murinae</taxon>
        <taxon>Rattus</taxon>
    </lineage>
</organism>
<reference key="1">
    <citation type="journal article" date="2004" name="Nature">
        <title>Genome sequence of the Brown Norway rat yields insights into mammalian evolution.</title>
        <authorList>
            <person name="Gibbs R.A."/>
            <person name="Weinstock G.M."/>
            <person name="Metzker M.L."/>
            <person name="Muzny D.M."/>
            <person name="Sodergren E.J."/>
            <person name="Scherer S."/>
            <person name="Scott G."/>
            <person name="Steffen D."/>
            <person name="Worley K.C."/>
            <person name="Burch P.E."/>
            <person name="Okwuonu G."/>
            <person name="Hines S."/>
            <person name="Lewis L."/>
            <person name="Deramo C."/>
            <person name="Delgado O."/>
            <person name="Dugan-Rocha S."/>
            <person name="Miner G."/>
            <person name="Morgan M."/>
            <person name="Hawes A."/>
            <person name="Gill R."/>
            <person name="Holt R.A."/>
            <person name="Adams M.D."/>
            <person name="Amanatides P.G."/>
            <person name="Baden-Tillson H."/>
            <person name="Barnstead M."/>
            <person name="Chin S."/>
            <person name="Evans C.A."/>
            <person name="Ferriera S."/>
            <person name="Fosler C."/>
            <person name="Glodek A."/>
            <person name="Gu Z."/>
            <person name="Jennings D."/>
            <person name="Kraft C.L."/>
            <person name="Nguyen T."/>
            <person name="Pfannkoch C.M."/>
            <person name="Sitter C."/>
            <person name="Sutton G.G."/>
            <person name="Venter J.C."/>
            <person name="Woodage T."/>
            <person name="Smith D."/>
            <person name="Lee H.-M."/>
            <person name="Gustafson E."/>
            <person name="Cahill P."/>
            <person name="Kana A."/>
            <person name="Doucette-Stamm L."/>
            <person name="Weinstock K."/>
            <person name="Fechtel K."/>
            <person name="Weiss R.B."/>
            <person name="Dunn D.M."/>
            <person name="Green E.D."/>
            <person name="Blakesley R.W."/>
            <person name="Bouffard G.G."/>
            <person name="De Jong P.J."/>
            <person name="Osoegawa K."/>
            <person name="Zhu B."/>
            <person name="Marra M."/>
            <person name="Schein J."/>
            <person name="Bosdet I."/>
            <person name="Fjell C."/>
            <person name="Jones S."/>
            <person name="Krzywinski M."/>
            <person name="Mathewson C."/>
            <person name="Siddiqui A."/>
            <person name="Wye N."/>
            <person name="McPherson J."/>
            <person name="Zhao S."/>
            <person name="Fraser C.M."/>
            <person name="Shetty J."/>
            <person name="Shatsman S."/>
            <person name="Geer K."/>
            <person name="Chen Y."/>
            <person name="Abramzon S."/>
            <person name="Nierman W.C."/>
            <person name="Havlak P.H."/>
            <person name="Chen R."/>
            <person name="Durbin K.J."/>
            <person name="Egan A."/>
            <person name="Ren Y."/>
            <person name="Song X.-Z."/>
            <person name="Li B."/>
            <person name="Liu Y."/>
            <person name="Qin X."/>
            <person name="Cawley S."/>
            <person name="Cooney A.J."/>
            <person name="D'Souza L.M."/>
            <person name="Martin K."/>
            <person name="Wu J.Q."/>
            <person name="Gonzalez-Garay M.L."/>
            <person name="Jackson A.R."/>
            <person name="Kalafus K.J."/>
            <person name="McLeod M.P."/>
            <person name="Milosavljevic A."/>
            <person name="Virk D."/>
            <person name="Volkov A."/>
            <person name="Wheeler D.A."/>
            <person name="Zhang Z."/>
            <person name="Bailey J.A."/>
            <person name="Eichler E.E."/>
            <person name="Tuzun E."/>
            <person name="Birney E."/>
            <person name="Mongin E."/>
            <person name="Ureta-Vidal A."/>
            <person name="Woodwark C."/>
            <person name="Zdobnov E."/>
            <person name="Bork P."/>
            <person name="Suyama M."/>
            <person name="Torrents D."/>
            <person name="Alexandersson M."/>
            <person name="Trask B.J."/>
            <person name="Young J.M."/>
            <person name="Huang H."/>
            <person name="Wang H."/>
            <person name="Xing H."/>
            <person name="Daniels S."/>
            <person name="Gietzen D."/>
            <person name="Schmidt J."/>
            <person name="Stevens K."/>
            <person name="Vitt U."/>
            <person name="Wingrove J."/>
            <person name="Camara F."/>
            <person name="Mar Alba M."/>
            <person name="Abril J.F."/>
            <person name="Guigo R."/>
            <person name="Smit A."/>
            <person name="Dubchak I."/>
            <person name="Rubin E.M."/>
            <person name="Couronne O."/>
            <person name="Poliakov A."/>
            <person name="Huebner N."/>
            <person name="Ganten D."/>
            <person name="Goesele C."/>
            <person name="Hummel O."/>
            <person name="Kreitler T."/>
            <person name="Lee Y.-A."/>
            <person name="Monti J."/>
            <person name="Schulz H."/>
            <person name="Zimdahl H."/>
            <person name="Himmelbauer H."/>
            <person name="Lehrach H."/>
            <person name="Jacob H.J."/>
            <person name="Bromberg S."/>
            <person name="Gullings-Handley J."/>
            <person name="Jensen-Seaman M.I."/>
            <person name="Kwitek A.E."/>
            <person name="Lazar J."/>
            <person name="Pasko D."/>
            <person name="Tonellato P.J."/>
            <person name="Twigger S."/>
            <person name="Ponting C.P."/>
            <person name="Duarte J.M."/>
            <person name="Rice S."/>
            <person name="Goodstadt L."/>
            <person name="Beatson S.A."/>
            <person name="Emes R.D."/>
            <person name="Winter E.E."/>
            <person name="Webber C."/>
            <person name="Brandt P."/>
            <person name="Nyakatura G."/>
            <person name="Adetobi M."/>
            <person name="Chiaromonte F."/>
            <person name="Elnitski L."/>
            <person name="Eswara P."/>
            <person name="Hardison R.C."/>
            <person name="Hou M."/>
            <person name="Kolbe D."/>
            <person name="Makova K."/>
            <person name="Miller W."/>
            <person name="Nekrutenko A."/>
            <person name="Riemer C."/>
            <person name="Schwartz S."/>
            <person name="Taylor J."/>
            <person name="Yang S."/>
            <person name="Zhang Y."/>
            <person name="Lindpaintner K."/>
            <person name="Andrews T.D."/>
            <person name="Caccamo M."/>
            <person name="Clamp M."/>
            <person name="Clarke L."/>
            <person name="Curwen V."/>
            <person name="Durbin R.M."/>
            <person name="Eyras E."/>
            <person name="Searle S.M."/>
            <person name="Cooper G.M."/>
            <person name="Batzoglou S."/>
            <person name="Brudno M."/>
            <person name="Sidow A."/>
            <person name="Stone E.A."/>
            <person name="Payseur B.A."/>
            <person name="Bourque G."/>
            <person name="Lopez-Otin C."/>
            <person name="Puente X.S."/>
            <person name="Chakrabarti K."/>
            <person name="Chatterji S."/>
            <person name="Dewey C."/>
            <person name="Pachter L."/>
            <person name="Bray N."/>
            <person name="Yap V.B."/>
            <person name="Caspi A."/>
            <person name="Tesler G."/>
            <person name="Pevzner P.A."/>
            <person name="Haussler D."/>
            <person name="Roskin K.M."/>
            <person name="Baertsch R."/>
            <person name="Clawson H."/>
            <person name="Furey T.S."/>
            <person name="Hinrichs A.S."/>
            <person name="Karolchik D."/>
            <person name="Kent W.J."/>
            <person name="Rosenbloom K.R."/>
            <person name="Trumbower H."/>
            <person name="Weirauch M."/>
            <person name="Cooper D.N."/>
            <person name="Stenson P.D."/>
            <person name="Ma B."/>
            <person name="Brent M."/>
            <person name="Arumugam M."/>
            <person name="Shteynberg D."/>
            <person name="Copley R.R."/>
            <person name="Taylor M.S."/>
            <person name="Riethman H."/>
            <person name="Mudunuri U."/>
            <person name="Peterson J."/>
            <person name="Guyer M."/>
            <person name="Felsenfeld A."/>
            <person name="Old S."/>
            <person name="Mockrin S."/>
            <person name="Collins F.S."/>
        </authorList>
    </citation>
    <scope>NUCLEOTIDE SEQUENCE [LARGE SCALE GENOMIC DNA]</scope>
    <source>
        <strain>Brown Norway</strain>
    </source>
</reference>
<reference key="2">
    <citation type="journal article" date="1994" name="Proc. Natl. Acad. Sci. U.S.A.">
        <title>Cloning of a cDNA encoding an ectoenzyme that degrades thyrotropin-releasing hormone.</title>
        <authorList>
            <person name="Schauder B."/>
            <person name="Schomburg L."/>
            <person name="Koehrle J."/>
            <person name="Bauer K."/>
        </authorList>
    </citation>
    <scope>NUCLEOTIDE SEQUENCE [MRNA] OF 18-1066</scope>
    <scope>PARTIAL PROTEIN SEQUENCE</scope>
    <source>
        <strain>Sprague-Dawley</strain>
        <tissue>Pituitary</tissue>
    </source>
</reference>
<reference key="3">
    <citation type="journal article" date="2000" name="Eur. J. Biochem.">
        <title>Analysis of the thyrotropin-releasing hormone-degrading ectoenzyme by site-directed mutagenesis of cysteine residues. Cys68 is involved in disulfide-linked dimerization.</title>
        <authorList>
            <person name="Papadopoulos T."/>
            <person name="Heuer H."/>
            <person name="Bauer K."/>
        </authorList>
    </citation>
    <scope>INTERCHAIN DISULFIDE BOND</scope>
</reference>
<name>TRHDE_RAT</name>
<sequence>MALDGERGEQEEEKKKKKKKKKRKKKEEEGAEKSSSPFAATMGEDDAALRASGRGLSDPWADSVGVRPRTTERHIAVHKRLVLAFAVSIVALLAVTMLAVLLSLRFDECGASAAMPGTDGGLGGFPERGGNSSYPGSARRNHHAGEESSQREIGEVGTAGTPSAHPPSEEEQEQWQPWTQLRLSGHLKPLHYNLMLTAFMENFTFSGEVNVEIACQNATRYVVLHASRVAVEKVQVAEDRAFGAVPVAGFFLYPQTQVLVVVLNRTLDAQRHYNLKIIYNALIENELLGFFRSSYVIHGERRFLGVTQFSPTHARKAFPCFDEPIYKATFKISIKHQATYLSLSNMPVETSVFEEDGWVTDHFSQTPLMSTYYLAWAICNFTYRETTTKSGVVVRLYARPDAIRRGSGDYALHITKRLIEFYEDYFKVPYSLPKLDLLAVPKHPYAAMENWGLSIFVEQRILLDPSVSSISYLLDVTMVIVHEICHQWFGDLVTPVWWEDVWLKEGFAHYFEFVGTDYLYPSWNMEKQRFLTDVLHEVMLLDGLASSHPVSQEVLRATDIDKVFDWIAYKKGAALIRMLANFMGHSVFQRGLQDYLTIHKYGNAARNDLWNTLSEALKRNGKYVNIQEVMDQWTLQMGYPVITILGNMTAENRILITQQHFIYDIGAKTKALQLQNSSYLWQIPLTIVVGNRSHVSSEAIIWVSNKSEHHRITYLDKGSWILGNINQTGYFRVNYDLRNWRLLIDQLIRNHEVLSVSNRAGLIDDAFSLARAGYLPQNIPLEIIRYLSEEKDFLPWHAASRALYPLDKLLDRMENYNIFNEYILKQVATTYSKLGWPKNNFNGSVVQASYQHEELRREVIMLACSFGNKHCHQQASTLISDWISSNRNRIPLNVRDIVYCTGVSLLDEDVWEFIWMKFHSTTAVSEKKILLEALTCSDDRNLLSRLLNLSLNSEVVLDQDAIDVIIHVARNPHGRDLAWKFFRDKWKILNTRYGEALFMNSKLISGVTEFLNTEGELKELKNFMKSYDGVASASFSRAVETVEANVRWKRLYQDELFQWLGKAMRH</sequence>